<accession>C3P4M0</accession>
<dbReference type="EC" id="3.5.2.7" evidence="1"/>
<dbReference type="EMBL" id="CP001598">
    <property type="protein sequence ID" value="ACQ46544.1"/>
    <property type="molecule type" value="Genomic_DNA"/>
</dbReference>
<dbReference type="RefSeq" id="WP_000887529.1">
    <property type="nucleotide sequence ID" value="NC_012659.1"/>
</dbReference>
<dbReference type="SMR" id="C3P4M0"/>
<dbReference type="GeneID" id="75086716"/>
<dbReference type="KEGG" id="bai:BAA_3737"/>
<dbReference type="HOGENOM" id="CLU_041647_0_1_9"/>
<dbReference type="UniPathway" id="UPA00379">
    <property type="reaction ID" value="UER00551"/>
</dbReference>
<dbReference type="GO" id="GO:0005737">
    <property type="term" value="C:cytoplasm"/>
    <property type="evidence" value="ECO:0007669"/>
    <property type="project" value="UniProtKB-SubCell"/>
</dbReference>
<dbReference type="GO" id="GO:0050480">
    <property type="term" value="F:imidazolonepropionase activity"/>
    <property type="evidence" value="ECO:0007669"/>
    <property type="project" value="UniProtKB-UniRule"/>
</dbReference>
<dbReference type="GO" id="GO:0005506">
    <property type="term" value="F:iron ion binding"/>
    <property type="evidence" value="ECO:0007669"/>
    <property type="project" value="UniProtKB-UniRule"/>
</dbReference>
<dbReference type="GO" id="GO:0008270">
    <property type="term" value="F:zinc ion binding"/>
    <property type="evidence" value="ECO:0007669"/>
    <property type="project" value="UniProtKB-UniRule"/>
</dbReference>
<dbReference type="GO" id="GO:0019556">
    <property type="term" value="P:L-histidine catabolic process to glutamate and formamide"/>
    <property type="evidence" value="ECO:0007669"/>
    <property type="project" value="UniProtKB-UniPathway"/>
</dbReference>
<dbReference type="GO" id="GO:0019557">
    <property type="term" value="P:L-histidine catabolic process to glutamate and formate"/>
    <property type="evidence" value="ECO:0007669"/>
    <property type="project" value="UniProtKB-UniPathway"/>
</dbReference>
<dbReference type="CDD" id="cd01296">
    <property type="entry name" value="Imidazolone-5PH"/>
    <property type="match status" value="1"/>
</dbReference>
<dbReference type="FunFam" id="3.20.20.140:FF:000007">
    <property type="entry name" value="Imidazolonepropionase"/>
    <property type="match status" value="1"/>
</dbReference>
<dbReference type="Gene3D" id="3.20.20.140">
    <property type="entry name" value="Metal-dependent hydrolases"/>
    <property type="match status" value="1"/>
</dbReference>
<dbReference type="Gene3D" id="2.30.40.10">
    <property type="entry name" value="Urease, subunit C, domain 1"/>
    <property type="match status" value="1"/>
</dbReference>
<dbReference type="HAMAP" id="MF_00372">
    <property type="entry name" value="HutI"/>
    <property type="match status" value="1"/>
</dbReference>
<dbReference type="InterPro" id="IPR006680">
    <property type="entry name" value="Amidohydro-rel"/>
</dbReference>
<dbReference type="InterPro" id="IPR005920">
    <property type="entry name" value="HutI"/>
</dbReference>
<dbReference type="InterPro" id="IPR011059">
    <property type="entry name" value="Metal-dep_hydrolase_composite"/>
</dbReference>
<dbReference type="InterPro" id="IPR032466">
    <property type="entry name" value="Metal_Hydrolase"/>
</dbReference>
<dbReference type="NCBIfam" id="TIGR01224">
    <property type="entry name" value="hutI"/>
    <property type="match status" value="1"/>
</dbReference>
<dbReference type="PANTHER" id="PTHR42752">
    <property type="entry name" value="IMIDAZOLONEPROPIONASE"/>
    <property type="match status" value="1"/>
</dbReference>
<dbReference type="PANTHER" id="PTHR42752:SF1">
    <property type="entry name" value="IMIDAZOLONEPROPIONASE-RELATED"/>
    <property type="match status" value="1"/>
</dbReference>
<dbReference type="Pfam" id="PF01979">
    <property type="entry name" value="Amidohydro_1"/>
    <property type="match status" value="1"/>
</dbReference>
<dbReference type="SUPFAM" id="SSF51338">
    <property type="entry name" value="Composite domain of metallo-dependent hydrolases"/>
    <property type="match status" value="1"/>
</dbReference>
<dbReference type="SUPFAM" id="SSF51556">
    <property type="entry name" value="Metallo-dependent hydrolases"/>
    <property type="match status" value="1"/>
</dbReference>
<keyword id="KW-0963">Cytoplasm</keyword>
<keyword id="KW-0369">Histidine metabolism</keyword>
<keyword id="KW-0378">Hydrolase</keyword>
<keyword id="KW-0408">Iron</keyword>
<keyword id="KW-0479">Metal-binding</keyword>
<keyword id="KW-0862">Zinc</keyword>
<evidence type="ECO:0000255" key="1">
    <source>
        <dbReference type="HAMAP-Rule" id="MF_00372"/>
    </source>
</evidence>
<reference key="1">
    <citation type="submission" date="2009-04" db="EMBL/GenBank/DDBJ databases">
        <title>Genome sequence of Bacillus anthracis A0248.</title>
        <authorList>
            <person name="Dodson R.J."/>
            <person name="Munk A.C."/>
            <person name="Bruce D."/>
            <person name="Detter C."/>
            <person name="Tapia R."/>
            <person name="Sutton G."/>
            <person name="Sims D."/>
            <person name="Brettin T."/>
        </authorList>
    </citation>
    <scope>NUCLEOTIDE SEQUENCE [LARGE SCALE GENOMIC DNA]</scope>
    <source>
        <strain>A0248</strain>
    </source>
</reference>
<feature type="chain" id="PRO_1000133877" description="Imidazolonepropionase">
    <location>
        <begin position="1"/>
        <end position="423"/>
    </location>
</feature>
<feature type="binding site" evidence="1">
    <location>
        <position position="78"/>
    </location>
    <ligand>
        <name>Fe(3+)</name>
        <dbReference type="ChEBI" id="CHEBI:29034"/>
    </ligand>
</feature>
<feature type="binding site" evidence="1">
    <location>
        <position position="78"/>
    </location>
    <ligand>
        <name>Zn(2+)</name>
        <dbReference type="ChEBI" id="CHEBI:29105"/>
    </ligand>
</feature>
<feature type="binding site" evidence="1">
    <location>
        <position position="80"/>
    </location>
    <ligand>
        <name>Fe(3+)</name>
        <dbReference type="ChEBI" id="CHEBI:29034"/>
    </ligand>
</feature>
<feature type="binding site" evidence="1">
    <location>
        <position position="80"/>
    </location>
    <ligand>
        <name>Zn(2+)</name>
        <dbReference type="ChEBI" id="CHEBI:29105"/>
    </ligand>
</feature>
<feature type="binding site" evidence="1">
    <location>
        <position position="87"/>
    </location>
    <ligand>
        <name>4-imidazolone-5-propanoate</name>
        <dbReference type="ChEBI" id="CHEBI:77893"/>
    </ligand>
</feature>
<feature type="binding site" evidence="1">
    <location>
        <position position="150"/>
    </location>
    <ligand>
        <name>4-imidazolone-5-propanoate</name>
        <dbReference type="ChEBI" id="CHEBI:77893"/>
    </ligand>
</feature>
<feature type="binding site" evidence="1">
    <location>
        <position position="150"/>
    </location>
    <ligand>
        <name>N-formimidoyl-L-glutamate</name>
        <dbReference type="ChEBI" id="CHEBI:58928"/>
    </ligand>
</feature>
<feature type="binding site" evidence="1">
    <location>
        <position position="183"/>
    </location>
    <ligand>
        <name>4-imidazolone-5-propanoate</name>
        <dbReference type="ChEBI" id="CHEBI:77893"/>
    </ligand>
</feature>
<feature type="binding site" evidence="1">
    <location>
        <position position="247"/>
    </location>
    <ligand>
        <name>Fe(3+)</name>
        <dbReference type="ChEBI" id="CHEBI:29034"/>
    </ligand>
</feature>
<feature type="binding site" evidence="1">
    <location>
        <position position="247"/>
    </location>
    <ligand>
        <name>Zn(2+)</name>
        <dbReference type="ChEBI" id="CHEBI:29105"/>
    </ligand>
</feature>
<feature type="binding site" evidence="1">
    <location>
        <position position="250"/>
    </location>
    <ligand>
        <name>4-imidazolone-5-propanoate</name>
        <dbReference type="ChEBI" id="CHEBI:77893"/>
    </ligand>
</feature>
<feature type="binding site" evidence="1">
    <location>
        <position position="322"/>
    </location>
    <ligand>
        <name>Fe(3+)</name>
        <dbReference type="ChEBI" id="CHEBI:29034"/>
    </ligand>
</feature>
<feature type="binding site" evidence="1">
    <location>
        <position position="322"/>
    </location>
    <ligand>
        <name>Zn(2+)</name>
        <dbReference type="ChEBI" id="CHEBI:29105"/>
    </ligand>
</feature>
<feature type="binding site" evidence="1">
    <location>
        <position position="324"/>
    </location>
    <ligand>
        <name>N-formimidoyl-L-glutamate</name>
        <dbReference type="ChEBI" id="CHEBI:58928"/>
    </ligand>
</feature>
<feature type="binding site" evidence="1">
    <location>
        <position position="326"/>
    </location>
    <ligand>
        <name>N-formimidoyl-L-glutamate</name>
        <dbReference type="ChEBI" id="CHEBI:58928"/>
    </ligand>
</feature>
<feature type="binding site" evidence="1">
    <location>
        <position position="327"/>
    </location>
    <ligand>
        <name>4-imidazolone-5-propanoate</name>
        <dbReference type="ChEBI" id="CHEBI:77893"/>
    </ligand>
</feature>
<protein>
    <recommendedName>
        <fullName evidence="1">Imidazolonepropionase</fullName>
        <ecNumber evidence="1">3.5.2.7</ecNumber>
    </recommendedName>
    <alternativeName>
        <fullName evidence="1">Imidazolone-5-propionate hydrolase</fullName>
    </alternativeName>
</protein>
<gene>
    <name evidence="1" type="primary">hutI</name>
    <name type="ordered locus">BAA_3737</name>
</gene>
<proteinExistence type="inferred from homology"/>
<name>HUTI_BACAA</name>
<sequence length="423" mass="46171">MLDTLLINIGQLLTMDQEDGLLRREAMNTLPVIENGAVGIENGVITFVGTAEEAKGLQAKEVIDCGGKMVSPGLVDPHTHLVFGGSRENEIALKLQGVPYLEILEQGGGILSTVNATKQASKEELVQKAKFHLDRMLSFGVTTVEAKSGYGLDDETEWKQLEATAQLQKEHPIDLVSTFLGAHAVPKEYKGRSKEFLQWMLDLLPEMKEKQLAEFVDIFCETGVFSVEESKEFLLKAKELGFDVKIHADEIDPLGGAEAAAEIGAASADHLVGASDKGIEMLANSNTVATLLPGTTFYLNKESFARGRKMIDEGVAVALATDFNPGSCPTENIQLIMSIAMLKLKMTPEEVWNAVTVNSSYAINRGDVAGKIRVGRKADLVLWDAYNYAYVPYHYGVSHVNTVWKNGNIAYTRGEQSWSTATI</sequence>
<comment type="function">
    <text evidence="1">Catalyzes the hydrolytic cleavage of the carbon-nitrogen bond in imidazolone-5-propanoate to yield N-formimidoyl-L-glutamate. It is the third step in the universal histidine degradation pathway.</text>
</comment>
<comment type="catalytic activity">
    <reaction evidence="1">
        <text>4-imidazolone-5-propanoate + H2O = N-formimidoyl-L-glutamate</text>
        <dbReference type="Rhea" id="RHEA:23660"/>
        <dbReference type="ChEBI" id="CHEBI:15377"/>
        <dbReference type="ChEBI" id="CHEBI:58928"/>
        <dbReference type="ChEBI" id="CHEBI:77893"/>
        <dbReference type="EC" id="3.5.2.7"/>
    </reaction>
</comment>
<comment type="cofactor">
    <cofactor evidence="1">
        <name>Zn(2+)</name>
        <dbReference type="ChEBI" id="CHEBI:29105"/>
    </cofactor>
    <cofactor evidence="1">
        <name>Fe(3+)</name>
        <dbReference type="ChEBI" id="CHEBI:29034"/>
    </cofactor>
    <text evidence="1">Binds 1 zinc or iron ion per subunit.</text>
</comment>
<comment type="pathway">
    <text evidence="1">Amino-acid degradation; L-histidine degradation into L-glutamate; N-formimidoyl-L-glutamate from L-histidine: step 3/3.</text>
</comment>
<comment type="subcellular location">
    <subcellularLocation>
        <location evidence="1">Cytoplasm</location>
    </subcellularLocation>
</comment>
<comment type="similarity">
    <text evidence="1">Belongs to the metallo-dependent hydrolases superfamily. HutI family.</text>
</comment>
<organism>
    <name type="scientific">Bacillus anthracis (strain A0248)</name>
    <dbReference type="NCBI Taxonomy" id="592021"/>
    <lineage>
        <taxon>Bacteria</taxon>
        <taxon>Bacillati</taxon>
        <taxon>Bacillota</taxon>
        <taxon>Bacilli</taxon>
        <taxon>Bacillales</taxon>
        <taxon>Bacillaceae</taxon>
        <taxon>Bacillus</taxon>
        <taxon>Bacillus cereus group</taxon>
    </lineage>
</organism>